<gene>
    <name type="primary">SARNP</name>
    <name type="synonym">HCC1</name>
</gene>
<feature type="initiator methionine" description="Removed" evidence="2">
    <location>
        <position position="1"/>
    </location>
</feature>
<feature type="chain" id="PRO_0000083917" description="SAP domain-containing ribonucleoprotein">
    <location>
        <begin position="2"/>
        <end position="210"/>
    </location>
</feature>
<feature type="domain" description="SAP" evidence="4">
    <location>
        <begin position="8"/>
        <end position="42"/>
    </location>
</feature>
<feature type="region of interest" description="Disordered" evidence="5">
    <location>
        <begin position="45"/>
        <end position="86"/>
    </location>
</feature>
<feature type="region of interest" description="Disordered" evidence="5">
    <location>
        <begin position="161"/>
        <end position="210"/>
    </location>
</feature>
<feature type="compositionally biased region" description="Acidic residues" evidence="5">
    <location>
        <begin position="45"/>
        <end position="64"/>
    </location>
</feature>
<feature type="compositionally biased region" description="Basic and acidic residues" evidence="5">
    <location>
        <begin position="65"/>
        <end position="86"/>
    </location>
</feature>
<feature type="compositionally biased region" description="Polar residues" evidence="5">
    <location>
        <begin position="184"/>
        <end position="193"/>
    </location>
</feature>
<feature type="modified residue" description="N-acetylalanine" evidence="2">
    <location>
        <position position="2"/>
    </location>
</feature>
<feature type="modified residue" description="N6-acetyllysine" evidence="3">
    <location>
        <position position="10"/>
    </location>
</feature>
<feature type="modified residue" description="N6-acetyllysine" evidence="3">
    <location>
        <position position="142"/>
    </location>
</feature>
<feature type="modified residue" description="Phosphoserine" evidence="3">
    <location>
        <position position="163"/>
    </location>
</feature>
<dbReference type="EMBL" id="CR861137">
    <property type="protein sequence ID" value="CAH93212.1"/>
    <property type="molecule type" value="mRNA"/>
</dbReference>
<dbReference type="RefSeq" id="NP_001126889.1">
    <property type="nucleotide sequence ID" value="NM_001133417.1"/>
</dbReference>
<dbReference type="SMR" id="Q5R4V4"/>
<dbReference type="FunCoup" id="Q5R4V4">
    <property type="interactions" value="3818"/>
</dbReference>
<dbReference type="STRING" id="9601.ENSPPYP00000005276"/>
<dbReference type="Ensembl" id="ENSPPYT00000055094.1">
    <property type="protein sequence ID" value="ENSPPYP00000044519.1"/>
    <property type="gene ID" value="ENSPPYG00000004630.2"/>
</dbReference>
<dbReference type="GeneID" id="100173904"/>
<dbReference type="KEGG" id="pon:100173904"/>
<dbReference type="CTD" id="84324"/>
<dbReference type="eggNOG" id="KOG0720">
    <property type="taxonomic scope" value="Eukaryota"/>
</dbReference>
<dbReference type="eggNOG" id="KOG4259">
    <property type="taxonomic scope" value="Eukaryota"/>
</dbReference>
<dbReference type="GeneTree" id="ENSGT00940000155637"/>
<dbReference type="HOGENOM" id="CLU_073926_1_0_1"/>
<dbReference type="InParanoid" id="Q5R4V4"/>
<dbReference type="OMA" id="ETPTKKH"/>
<dbReference type="OrthoDB" id="5837849at2759"/>
<dbReference type="TreeFam" id="TF319843"/>
<dbReference type="Proteomes" id="UP000001595">
    <property type="component" value="Chromosome 12"/>
</dbReference>
<dbReference type="GO" id="GO:0016607">
    <property type="term" value="C:nuclear speck"/>
    <property type="evidence" value="ECO:0000250"/>
    <property type="project" value="UniProtKB"/>
</dbReference>
<dbReference type="GO" id="GO:0000346">
    <property type="term" value="C:transcription export complex"/>
    <property type="evidence" value="ECO:0000250"/>
    <property type="project" value="UniProtKB"/>
</dbReference>
<dbReference type="GO" id="GO:0003677">
    <property type="term" value="F:DNA binding"/>
    <property type="evidence" value="ECO:0007669"/>
    <property type="project" value="UniProtKB-KW"/>
</dbReference>
<dbReference type="GO" id="GO:0003723">
    <property type="term" value="F:RNA binding"/>
    <property type="evidence" value="ECO:0007669"/>
    <property type="project" value="UniProtKB-KW"/>
</dbReference>
<dbReference type="GO" id="GO:0006406">
    <property type="term" value="P:mRNA export from nucleus"/>
    <property type="evidence" value="ECO:0000250"/>
    <property type="project" value="UniProtKB"/>
</dbReference>
<dbReference type="GO" id="GO:0016973">
    <property type="term" value="P:poly(A)+ mRNA export from nucleus"/>
    <property type="evidence" value="ECO:0007669"/>
    <property type="project" value="TreeGrafter"/>
</dbReference>
<dbReference type="GO" id="GO:0006417">
    <property type="term" value="P:regulation of translation"/>
    <property type="evidence" value="ECO:0007669"/>
    <property type="project" value="UniProtKB-KW"/>
</dbReference>
<dbReference type="FunFam" id="1.10.720.30:FF:000013">
    <property type="entry name" value="SAP domain-containing ribonucleoprotein"/>
    <property type="match status" value="1"/>
</dbReference>
<dbReference type="Gene3D" id="1.10.720.30">
    <property type="entry name" value="SAP domain"/>
    <property type="match status" value="1"/>
</dbReference>
<dbReference type="InterPro" id="IPR003034">
    <property type="entry name" value="SAP_dom"/>
</dbReference>
<dbReference type="InterPro" id="IPR036361">
    <property type="entry name" value="SAP_dom_sf"/>
</dbReference>
<dbReference type="InterPro" id="IPR052240">
    <property type="entry name" value="SAP_domain_ribonucleoprotein"/>
</dbReference>
<dbReference type="PANTHER" id="PTHR46551">
    <property type="entry name" value="SAP DOMAIN-CONTAINING RIBONUCLEOPROTEIN"/>
    <property type="match status" value="1"/>
</dbReference>
<dbReference type="PANTHER" id="PTHR46551:SF2">
    <property type="entry name" value="SAP DOMAIN-CONTAINING RIBONUCLEOPROTEIN"/>
    <property type="match status" value="1"/>
</dbReference>
<dbReference type="Pfam" id="PF02037">
    <property type="entry name" value="SAP"/>
    <property type="match status" value="1"/>
</dbReference>
<dbReference type="SMART" id="SM00513">
    <property type="entry name" value="SAP"/>
    <property type="match status" value="1"/>
</dbReference>
<dbReference type="SUPFAM" id="SSF68906">
    <property type="entry name" value="SAP domain"/>
    <property type="match status" value="1"/>
</dbReference>
<dbReference type="PROSITE" id="PS50800">
    <property type="entry name" value="SAP"/>
    <property type="match status" value="1"/>
</dbReference>
<accession>Q5R4V4</accession>
<reference key="1">
    <citation type="submission" date="2004-11" db="EMBL/GenBank/DDBJ databases">
        <authorList>
            <consortium name="The German cDNA consortium"/>
        </authorList>
    </citation>
    <scope>NUCLEOTIDE SEQUENCE [LARGE SCALE MRNA]</scope>
    <source>
        <tissue>Brain cortex</tissue>
    </source>
</reference>
<comment type="function">
    <text evidence="2">Binds both single-stranded and double-stranded DNA with higher affinity for the single-stranded form. Specifically binds to scaffold/matrix attachment region DNA. Also binds single-stranded RNA. Enhances RNA unwinding activity of DDX39A. May participate in important transcriptional or translational control of cell growth, metabolism and carcinogenesis. Component of the TREX complex which is thought to couple mRNA transcription, processing and nuclear export, and specifically associates with spliced mRNA and not with unspliced pre-mRNA. The TREX complex is recruited to spliced mRNAs by a transcription-independent mechanism, binds to mRNA upstream of the exon-junction complex (EJC) and is recruited in a splicing- and cap-dependent manner to a region near the 5' end of the mRNA where it functions in mRNA export to the cytoplasm via the TAP/NXF1 pathway. Associates with DDX39B, which facilitates RNA binding of DDX39B and likely plays a role in mRNA export.</text>
</comment>
<comment type="subunit">
    <text evidence="2">Interacts with DDX39A. Interacts with FUS. Interacts (via the C-terminal domain) with DDX39B; the interaction is direct and facilitates RNA binding of DDX39B. Component of the transcription/export (TREX) complex at least composed of ALYREF/THOC4, DDX39B, SARNP/CIP29, CHTOP and the THO subcomplex; TREX seems to have dynamic structure involving ATP-dependent remodeling; in the complex interacts directly with DDX39B in a ATP-dependent manner which bridges it to ALYREF/THOC4.</text>
</comment>
<comment type="subcellular location">
    <subcellularLocation>
        <location evidence="1">Nucleus</location>
    </subcellularLocation>
    <subcellularLocation>
        <location evidence="1">Nucleus speckle</location>
    </subcellularLocation>
</comment>
<comment type="similarity">
    <text evidence="6">Belongs to the SAP domain-containing ribonucleoprotein family.</text>
</comment>
<sequence>MATETVELHKLKLAELKQECLARGLETKGIKQDLIHRLQAYLEEHAEEEANEEDVLGDETEEEETKPIELPVKEEEPPEKTVDVAAEKKVVKITSEIPQTERMQKRAERFNVPVSLESKKAARAARFGISSVPTKGLSSDNKPMVNLDKLKERAQRFGLNVSSISRKSEDDEKLKKRKERFGIVTSSAGTGTTEDTEAKKRKRAERFGIA</sequence>
<protein>
    <recommendedName>
        <fullName>SAP domain-containing ribonucleoprotein</fullName>
    </recommendedName>
    <alternativeName>
        <fullName>Nuclear protein Hcc-1</fullName>
    </alternativeName>
</protein>
<name>SARNP_PONAB</name>
<evidence type="ECO:0000250" key="1"/>
<evidence type="ECO:0000250" key="2">
    <source>
        <dbReference type="UniProtKB" id="P82979"/>
    </source>
</evidence>
<evidence type="ECO:0000250" key="3">
    <source>
        <dbReference type="UniProtKB" id="Q9D1J3"/>
    </source>
</evidence>
<evidence type="ECO:0000255" key="4">
    <source>
        <dbReference type="PROSITE-ProRule" id="PRU00186"/>
    </source>
</evidence>
<evidence type="ECO:0000256" key="5">
    <source>
        <dbReference type="SAM" id="MobiDB-lite"/>
    </source>
</evidence>
<evidence type="ECO:0000305" key="6"/>
<organism>
    <name type="scientific">Pongo abelii</name>
    <name type="common">Sumatran orangutan</name>
    <name type="synonym">Pongo pygmaeus abelii</name>
    <dbReference type="NCBI Taxonomy" id="9601"/>
    <lineage>
        <taxon>Eukaryota</taxon>
        <taxon>Metazoa</taxon>
        <taxon>Chordata</taxon>
        <taxon>Craniata</taxon>
        <taxon>Vertebrata</taxon>
        <taxon>Euteleostomi</taxon>
        <taxon>Mammalia</taxon>
        <taxon>Eutheria</taxon>
        <taxon>Euarchontoglires</taxon>
        <taxon>Primates</taxon>
        <taxon>Haplorrhini</taxon>
        <taxon>Catarrhini</taxon>
        <taxon>Hominidae</taxon>
        <taxon>Pongo</taxon>
    </lineage>
</organism>
<proteinExistence type="evidence at transcript level"/>
<keyword id="KW-0007">Acetylation</keyword>
<keyword id="KW-0238">DNA-binding</keyword>
<keyword id="KW-0509">mRNA transport</keyword>
<keyword id="KW-0539">Nucleus</keyword>
<keyword id="KW-0597">Phosphoprotein</keyword>
<keyword id="KW-1185">Reference proteome</keyword>
<keyword id="KW-0694">RNA-binding</keyword>
<keyword id="KW-0804">Transcription</keyword>
<keyword id="KW-0805">Transcription regulation</keyword>
<keyword id="KW-0810">Translation regulation</keyword>
<keyword id="KW-0813">Transport</keyword>